<proteinExistence type="evidence at protein level"/>
<keyword id="KW-0998">Cell outer membrane</keyword>
<keyword id="KW-0406">Ion transport</keyword>
<keyword id="KW-0472">Membrane</keyword>
<keyword id="KW-0626">Porin</keyword>
<keyword id="KW-0732">Signal</keyword>
<keyword id="KW-0812">Transmembrane</keyword>
<keyword id="KW-1134">Transmembrane beta strand</keyword>
<keyword id="KW-0813">Transport</keyword>
<gene>
    <name type="primary">omp2b</name>
    <name type="ordered locus">BAbS19_I06181</name>
</gene>
<reference key="1">
    <citation type="journal article" date="1989" name="Infect. Immun.">
        <title>DNA sequence and expression of the 36-kilodalton outer membrane protein gene of Brucella abortus.</title>
        <authorList>
            <person name="Ficht T.A."/>
            <person name="Bearden S.W."/>
            <person name="Sowa B.A."/>
            <person name="Adams L.G."/>
        </authorList>
    </citation>
    <scope>NUCLEOTIDE SEQUENCE [GENOMIC DNA]</scope>
    <scope>EXPRESSION</scope>
</reference>
<reference key="2">
    <citation type="journal article" date="2008" name="PLoS ONE">
        <title>Genome sequence of Brucella abortus vaccine strain S19 compared to virulent strains yields candidate virulence genes.</title>
        <authorList>
            <person name="Crasta O.R."/>
            <person name="Folkerts O."/>
            <person name="Fei Z."/>
            <person name="Mane S.P."/>
            <person name="Evans C."/>
            <person name="Martino-Catt S."/>
            <person name="Bricker B."/>
            <person name="Yu G."/>
            <person name="Du L."/>
            <person name="Sobral B.W."/>
        </authorList>
    </citation>
    <scope>NUCLEOTIDE SEQUENCE [LARGE SCALE GENOMIC DNA]</scope>
    <source>
        <strain>S19</strain>
    </source>
</reference>
<reference key="3">
    <citation type="journal article" date="1993" name="Infect. Immun.">
        <title>The omp2 gene locus of Brucella abortus encodes two homologous outer membrane proteins with properties characteristic of bacterial porins.</title>
        <authorList>
            <person name="Marquis H."/>
            <person name="Ficht T.A."/>
        </authorList>
    </citation>
    <scope>FUNCTION AS PORIN</scope>
    <scope>SUBUNIT</scope>
    <scope>SUBCELLULAR LOCATION</scope>
</reference>
<reference key="4">
    <citation type="journal article" date="1997" name="FEMS Microbiol. Lett.">
        <title>Brucella Omp2a and Omp2b porins: single channel measurements and topology prediction.</title>
        <authorList>
            <person name="Mobasheri H."/>
            <person name="Ficht T.A."/>
            <person name="Marquis H."/>
            <person name="Lea E.J.A."/>
            <person name="Lakey J.H."/>
        </authorList>
    </citation>
    <scope>DOMAIN</scope>
    <scope>TOPOLOGY MODEL</scope>
</reference>
<reference key="5">
    <citation type="journal article" date="2000" name="J. Biomol. Struct. Dyn.">
        <title>Topology prediction of Brucella abortus Omp2b and Omp2a porins after critical assessment of transmembrane beta strands prediction by several secondary structure prediction methods.</title>
        <authorList>
            <person name="Paquet J.-Y."/>
            <person name="Vinals C."/>
            <person name="Wouters J."/>
            <person name="Letesson J.-J."/>
            <person name="Depiereux E."/>
        </authorList>
    </citation>
    <scope>DOMAIN</scope>
    <scope>TOPOLOGY MODEL</scope>
</reference>
<protein>
    <recommendedName>
        <fullName>Porin Omp2b</fullName>
    </recommendedName>
</protein>
<sequence>MNIKSLLLGSAAALVAASGAQAADAIVAPEPEAVEYVRVCDAYGAGYFYIPGTETCLRVHGYVRYDVKGGDDVYSGTDRNGWDKSARFALRVSTGSETELGTLKTFTELRFNYAANNSGVDGKYGNETSSGTVMEFAYIQLGGLRVGIDESEFHTFTGYLGDVINDDVISAGSYRTGKISYTFTGGNGFSAVIALEQGGDNDGGYTGTTNYHIDGYMPDVVGGLKYAGGWGSIAGVVAYDSVIEEWAAKVRGDVNITDQFSVWLQGAYSSAATPDQNYGQWGGDWAVWGGLKYQATQKAAFNLQAAHDDWGKTAVTANVAYELVPGFTVTPEVSYTKFGGEWKNTVAEDNAWGGIVRFQRSF</sequence>
<evidence type="ECO:0000255" key="1"/>
<evidence type="ECO:0000269" key="2">
    <source>
    </source>
</evidence>
<evidence type="ECO:0000269" key="3">
    <source>
    </source>
</evidence>
<evidence type="ECO:0000269" key="4">
    <source>
    </source>
</evidence>
<evidence type="ECO:0000305" key="5"/>
<evidence type="ECO:0000305" key="6">
    <source>
    </source>
</evidence>
<dbReference type="EMBL" id="M26034">
    <property type="protein sequence ID" value="AAA83991.1"/>
    <property type="molecule type" value="Genomic_DNA"/>
</dbReference>
<dbReference type="EMBL" id="CP000887">
    <property type="status" value="NOT_ANNOTATED_CDS"/>
    <property type="molecule type" value="Genomic_DNA"/>
</dbReference>
<dbReference type="SMR" id="Q44665"/>
<dbReference type="TCDB" id="1.B.70.1.15">
    <property type="family name" value="the outer membrane channel (omc) family"/>
</dbReference>
<dbReference type="Proteomes" id="UP000002565">
    <property type="component" value="Chromosome 1"/>
</dbReference>
<dbReference type="GO" id="GO:0009279">
    <property type="term" value="C:cell outer membrane"/>
    <property type="evidence" value="ECO:0007669"/>
    <property type="project" value="UniProtKB-SubCell"/>
</dbReference>
<dbReference type="GO" id="GO:0046930">
    <property type="term" value="C:pore complex"/>
    <property type="evidence" value="ECO:0007669"/>
    <property type="project" value="UniProtKB-KW"/>
</dbReference>
<dbReference type="GO" id="GO:0015288">
    <property type="term" value="F:porin activity"/>
    <property type="evidence" value="ECO:0007669"/>
    <property type="project" value="UniProtKB-KW"/>
</dbReference>
<dbReference type="GO" id="GO:0006811">
    <property type="term" value="P:monoatomic ion transport"/>
    <property type="evidence" value="ECO:0007669"/>
    <property type="project" value="UniProtKB-KW"/>
</dbReference>
<dbReference type="InterPro" id="IPR003684">
    <property type="entry name" value="Porin_alphabac"/>
</dbReference>
<dbReference type="Pfam" id="PF02530">
    <property type="entry name" value="Porin_2"/>
    <property type="match status" value="1"/>
</dbReference>
<dbReference type="SUPFAM" id="SSF56935">
    <property type="entry name" value="Porins"/>
    <property type="match status" value="1"/>
</dbReference>
<feature type="signal peptide" evidence="1">
    <location>
        <begin position="1"/>
        <end position="22"/>
    </location>
</feature>
<feature type="chain" id="PRO_0000354006" description="Porin Omp2b">
    <location>
        <begin position="23"/>
        <end position="362"/>
    </location>
</feature>
<name>OMP2B_BRUA1</name>
<organism>
    <name type="scientific">Brucella abortus (strain S19)</name>
    <dbReference type="NCBI Taxonomy" id="430066"/>
    <lineage>
        <taxon>Bacteria</taxon>
        <taxon>Pseudomonadati</taxon>
        <taxon>Pseudomonadota</taxon>
        <taxon>Alphaproteobacteria</taxon>
        <taxon>Hyphomicrobiales</taxon>
        <taxon>Brucellaceae</taxon>
        <taxon>Brucella/Ochrobactrum group</taxon>
        <taxon>Brucella</taxon>
    </lineage>
</organism>
<accession>Q44665</accession>
<comment type="function">
    <text evidence="3">Forms passive diffusion pores that allow small molecular weight hydrophilic materials across the outer membrane.</text>
</comment>
<comment type="subunit">
    <text evidence="3">Homotrimer.</text>
</comment>
<comment type="subcellular location">
    <subcellularLocation>
        <location evidence="3">Cell outer membrane</location>
        <topology evidence="3">Multi-pass membrane protein</topology>
    </subcellularLocation>
</comment>
<comment type="domain">
    <text evidence="2 4">Consists of 16-stranded beta-barrel sheets, with large surface-exposed loops, that form a transmembrane pore at the center of each barrel. The pore is partially ocluded by a peptide loop that folds into the pore lumen.</text>
</comment>
<comment type="miscellaneous">
    <text evidence="6">The pore formed by Omp2a is larger than the one formed by Omp2b. Omp2b pores have optimal permeability to allow growth and protection against harmful compounds. The larger pore formed by Omp2a may be advantageous for intracellular growth, when the bacterium is competing with the host cell for nutrients whose concentration is particularly low within the phagosome.</text>
</comment>
<comment type="similarity">
    <text evidence="5">Belongs to the alphaproteobacteria porin family.</text>
</comment>